<sequence length="168" mass="18259">MNEQTSRLNRERRFLVLLGLICLSLIGGALYMQVVLGEAPCPLCILQRYALLFIAVFAFIAAAMPGRRSLTFFEALVVLSAIGGIVAAGNHVYILANPMVSCGIDTLQPIVDDLPLAKLWPLAFQVDGFCSTPYPPILGLSLAQWALVAFVLTAVLVPLGIYRNRRQA</sequence>
<protein>
    <recommendedName>
        <fullName>Disulfide bond formation protein B 1</fullName>
    </recommendedName>
    <alternativeName>
        <fullName>Disulfide oxidoreductase 1</fullName>
    </alternativeName>
</protein>
<dbReference type="EMBL" id="AE015451">
    <property type="protein sequence ID" value="AAN66434.1"/>
    <property type="molecule type" value="Genomic_DNA"/>
</dbReference>
<dbReference type="RefSeq" id="NP_742970.1">
    <property type="nucleotide sequence ID" value="NC_002947.4"/>
</dbReference>
<dbReference type="RefSeq" id="WP_003248609.1">
    <property type="nucleotide sequence ID" value="NZ_CP169744.1"/>
</dbReference>
<dbReference type="SMR" id="P59345"/>
<dbReference type="STRING" id="160488.PP_0809"/>
<dbReference type="PaxDb" id="160488-PP_0809"/>
<dbReference type="KEGG" id="ppu:PP_0809"/>
<dbReference type="PATRIC" id="fig|160488.4.peg.867"/>
<dbReference type="eggNOG" id="COG1495">
    <property type="taxonomic scope" value="Bacteria"/>
</dbReference>
<dbReference type="HOGENOM" id="CLU_098660_1_0_6"/>
<dbReference type="OrthoDB" id="3711263at2"/>
<dbReference type="PhylomeDB" id="P59345"/>
<dbReference type="BioCyc" id="PPUT160488:G1G01-884-MONOMER"/>
<dbReference type="Proteomes" id="UP000000556">
    <property type="component" value="Chromosome"/>
</dbReference>
<dbReference type="GO" id="GO:0005886">
    <property type="term" value="C:plasma membrane"/>
    <property type="evidence" value="ECO:0007669"/>
    <property type="project" value="UniProtKB-SubCell"/>
</dbReference>
<dbReference type="GO" id="GO:0009055">
    <property type="term" value="F:electron transfer activity"/>
    <property type="evidence" value="ECO:0007669"/>
    <property type="project" value="UniProtKB-UniRule"/>
</dbReference>
<dbReference type="GO" id="GO:0015035">
    <property type="term" value="F:protein-disulfide reductase activity"/>
    <property type="evidence" value="ECO:0007669"/>
    <property type="project" value="UniProtKB-UniRule"/>
</dbReference>
<dbReference type="GO" id="GO:0006457">
    <property type="term" value="P:protein folding"/>
    <property type="evidence" value="ECO:0007669"/>
    <property type="project" value="InterPro"/>
</dbReference>
<dbReference type="Gene3D" id="1.20.1550.10">
    <property type="entry name" value="DsbB-like"/>
    <property type="match status" value="1"/>
</dbReference>
<dbReference type="HAMAP" id="MF_00286">
    <property type="entry name" value="DsbB"/>
    <property type="match status" value="1"/>
</dbReference>
<dbReference type="InterPro" id="IPR003752">
    <property type="entry name" value="DiS_bond_form_DsbB/BdbC"/>
</dbReference>
<dbReference type="InterPro" id="IPR022920">
    <property type="entry name" value="Disulphide_bond_form_DsbB"/>
</dbReference>
<dbReference type="InterPro" id="IPR050183">
    <property type="entry name" value="DsbB"/>
</dbReference>
<dbReference type="InterPro" id="IPR023380">
    <property type="entry name" value="DsbB-like_sf"/>
</dbReference>
<dbReference type="NCBIfam" id="NF002552">
    <property type="entry name" value="PRK02110.1"/>
    <property type="match status" value="1"/>
</dbReference>
<dbReference type="PANTHER" id="PTHR36570">
    <property type="entry name" value="DISULFIDE BOND FORMATION PROTEIN B"/>
    <property type="match status" value="1"/>
</dbReference>
<dbReference type="PANTHER" id="PTHR36570:SF3">
    <property type="entry name" value="DISULFIDE BOND FORMATION PROTEIN B"/>
    <property type="match status" value="1"/>
</dbReference>
<dbReference type="Pfam" id="PF02600">
    <property type="entry name" value="DsbB"/>
    <property type="match status" value="1"/>
</dbReference>
<dbReference type="SUPFAM" id="SSF158442">
    <property type="entry name" value="DsbB-like"/>
    <property type="match status" value="1"/>
</dbReference>
<reference key="1">
    <citation type="journal article" date="2002" name="Environ. Microbiol.">
        <title>Complete genome sequence and comparative analysis of the metabolically versatile Pseudomonas putida KT2440.</title>
        <authorList>
            <person name="Nelson K.E."/>
            <person name="Weinel C."/>
            <person name="Paulsen I.T."/>
            <person name="Dodson R.J."/>
            <person name="Hilbert H."/>
            <person name="Martins dos Santos V.A.P."/>
            <person name="Fouts D.E."/>
            <person name="Gill S.R."/>
            <person name="Pop M."/>
            <person name="Holmes M."/>
            <person name="Brinkac L.M."/>
            <person name="Beanan M.J."/>
            <person name="DeBoy R.T."/>
            <person name="Daugherty S.C."/>
            <person name="Kolonay J.F."/>
            <person name="Madupu R."/>
            <person name="Nelson W.C."/>
            <person name="White O."/>
            <person name="Peterson J.D."/>
            <person name="Khouri H.M."/>
            <person name="Hance I."/>
            <person name="Chris Lee P."/>
            <person name="Holtzapple E.K."/>
            <person name="Scanlan D."/>
            <person name="Tran K."/>
            <person name="Moazzez A."/>
            <person name="Utterback T.R."/>
            <person name="Rizzo M."/>
            <person name="Lee K."/>
            <person name="Kosack D."/>
            <person name="Moestl D."/>
            <person name="Wedler H."/>
            <person name="Lauber J."/>
            <person name="Stjepandic D."/>
            <person name="Hoheisel J."/>
            <person name="Straetz M."/>
            <person name="Heim S."/>
            <person name="Kiewitz C."/>
            <person name="Eisen J.A."/>
            <person name="Timmis K.N."/>
            <person name="Duesterhoeft A."/>
            <person name="Tuemmler B."/>
            <person name="Fraser C.M."/>
        </authorList>
    </citation>
    <scope>NUCLEOTIDE SEQUENCE [LARGE SCALE GENOMIC DNA]</scope>
    <source>
        <strain>ATCC 47054 / DSM 6125 / CFBP 8728 / NCIMB 11950 / KT2440</strain>
    </source>
</reference>
<gene>
    <name type="primary">dsbB1</name>
    <name type="ordered locus">PP_0809</name>
</gene>
<feature type="chain" id="PRO_0000059353" description="Disulfide bond formation protein B 1">
    <location>
        <begin position="1"/>
        <end position="168"/>
    </location>
</feature>
<feature type="topological domain" description="Cytoplasmic" evidence="2">
    <location>
        <begin position="1"/>
        <end position="14"/>
    </location>
</feature>
<feature type="transmembrane region" description="Helical" evidence="2">
    <location>
        <begin position="15"/>
        <end position="31"/>
    </location>
</feature>
<feature type="topological domain" description="Periplasmic" evidence="2">
    <location>
        <begin position="32"/>
        <end position="49"/>
    </location>
</feature>
<feature type="transmembrane region" description="Helical" evidence="2">
    <location>
        <begin position="50"/>
        <end position="65"/>
    </location>
</feature>
<feature type="topological domain" description="Cytoplasmic" evidence="2">
    <location>
        <begin position="66"/>
        <end position="72"/>
    </location>
</feature>
<feature type="transmembrane region" description="Helical" evidence="2">
    <location>
        <begin position="73"/>
        <end position="89"/>
    </location>
</feature>
<feature type="topological domain" description="Periplasmic" evidence="2">
    <location>
        <begin position="90"/>
        <end position="144"/>
    </location>
</feature>
<feature type="transmembrane region" description="Helical" evidence="2">
    <location>
        <begin position="145"/>
        <end position="163"/>
    </location>
</feature>
<feature type="topological domain" description="Cytoplasmic" evidence="2">
    <location>
        <begin position="164"/>
        <end position="168"/>
    </location>
</feature>
<feature type="disulfide bond" description="Redox-active" evidence="1">
    <location>
        <begin position="41"/>
        <end position="44"/>
    </location>
</feature>
<feature type="disulfide bond" description="Redox-active" evidence="1">
    <location>
        <begin position="102"/>
        <end position="130"/>
    </location>
</feature>
<proteinExistence type="inferred from homology"/>
<comment type="function">
    <text evidence="1">Required for disulfide bond formation in some periplasmic proteins. Acts by oxidizing the DsbA protein (By similarity).</text>
</comment>
<comment type="subcellular location">
    <subcellularLocation>
        <location evidence="1">Cell inner membrane</location>
        <topology evidence="1">Multi-pass membrane protein</topology>
    </subcellularLocation>
</comment>
<comment type="similarity">
    <text evidence="3">Belongs to the DsbB family.</text>
</comment>
<evidence type="ECO:0000250" key="1"/>
<evidence type="ECO:0000255" key="2"/>
<evidence type="ECO:0000305" key="3"/>
<organism>
    <name type="scientific">Pseudomonas putida (strain ATCC 47054 / DSM 6125 / CFBP 8728 / NCIMB 11950 / KT2440)</name>
    <dbReference type="NCBI Taxonomy" id="160488"/>
    <lineage>
        <taxon>Bacteria</taxon>
        <taxon>Pseudomonadati</taxon>
        <taxon>Pseudomonadota</taxon>
        <taxon>Gammaproteobacteria</taxon>
        <taxon>Pseudomonadales</taxon>
        <taxon>Pseudomonadaceae</taxon>
        <taxon>Pseudomonas</taxon>
    </lineage>
</organism>
<keyword id="KW-0997">Cell inner membrane</keyword>
<keyword id="KW-1003">Cell membrane</keyword>
<keyword id="KW-0143">Chaperone</keyword>
<keyword id="KW-1015">Disulfide bond</keyword>
<keyword id="KW-0249">Electron transport</keyword>
<keyword id="KW-0472">Membrane</keyword>
<keyword id="KW-0560">Oxidoreductase</keyword>
<keyword id="KW-0676">Redox-active center</keyword>
<keyword id="KW-1185">Reference proteome</keyword>
<keyword id="KW-0812">Transmembrane</keyword>
<keyword id="KW-1133">Transmembrane helix</keyword>
<keyword id="KW-0813">Transport</keyword>
<accession>P59345</accession>
<name>DSBB1_PSEPK</name>